<gene>
    <name evidence="1" type="primary">atpD</name>
    <name type="ordered locus">FTH_1732</name>
</gene>
<accession>Q0BK84</accession>
<name>ATPB_FRATO</name>
<reference key="1">
    <citation type="journal article" date="2006" name="J. Bacteriol.">
        <title>Chromosome rearrangement and diversification of Francisella tularensis revealed by the type B (OSU18) genome sequence.</title>
        <authorList>
            <person name="Petrosino J.F."/>
            <person name="Xiang Q."/>
            <person name="Karpathy S.E."/>
            <person name="Jiang H."/>
            <person name="Yerrapragada S."/>
            <person name="Liu Y."/>
            <person name="Gioia J."/>
            <person name="Hemphill L."/>
            <person name="Gonzalez A."/>
            <person name="Raghavan T.M."/>
            <person name="Uzman A."/>
            <person name="Fox G.E."/>
            <person name="Highlander S."/>
            <person name="Reichard M."/>
            <person name="Morton R.J."/>
            <person name="Clinkenbeard K.D."/>
            <person name="Weinstock G.M."/>
        </authorList>
    </citation>
    <scope>NUCLEOTIDE SEQUENCE [LARGE SCALE GENOMIC DNA]</scope>
    <source>
        <strain>OSU18</strain>
    </source>
</reference>
<sequence>MSTGKIIQVIGAVIDVEFARDNTPKVYDALNVVEAGLVLEVQQQIGDGVVRTIAMGSSDGLRRGMEVKNTNAPISVPVGHGTLGRIMNVLGEPIDEAGPIEYTEKRSIHQAPPAYDELALSTEILETGIKVVDLICPFAKGGKVGLFGGAGVGKTVTMMELINNIAKEHSGYSVFSGVGERTREGNDFYYEMKYSNVLDKVSLVYGQMNEPPGNRLRVALSGLTIAEGFRDEKRDVLMFIDNIYRYTLAGTEVSALLGRMPSAVGYQPTLAAEMGALQERITSTKTGSITSVQAVYVPADDLTDPSPATTFSHLDATIVLSRQIAELGIYPAVDPLDSTSRQLDPLVVGQDHYETARAVQKVLQRYKELKDIIAILGMDELSDEDKKIVDRARKIQRFLSQPFHVAEVFTGNPGKFVSLKDTVASFKAIVNGEYDHLPEQAFYMVGSIQEAIEKAKTL</sequence>
<proteinExistence type="inferred from homology"/>
<protein>
    <recommendedName>
        <fullName evidence="1">ATP synthase subunit beta</fullName>
        <ecNumber evidence="1">7.1.2.2</ecNumber>
    </recommendedName>
    <alternativeName>
        <fullName evidence="1">ATP synthase F1 sector subunit beta</fullName>
    </alternativeName>
    <alternativeName>
        <fullName evidence="1">F-ATPase subunit beta</fullName>
    </alternativeName>
</protein>
<dbReference type="EC" id="7.1.2.2" evidence="1"/>
<dbReference type="EMBL" id="CP000437">
    <property type="protein sequence ID" value="ABI83500.1"/>
    <property type="molecule type" value="Genomic_DNA"/>
</dbReference>
<dbReference type="RefSeq" id="WP_003017334.1">
    <property type="nucleotide sequence ID" value="NC_017463.1"/>
</dbReference>
<dbReference type="SMR" id="Q0BK84"/>
<dbReference type="KEGG" id="fth:FTH_1732"/>
<dbReference type="GO" id="GO:0005886">
    <property type="term" value="C:plasma membrane"/>
    <property type="evidence" value="ECO:0007669"/>
    <property type="project" value="UniProtKB-SubCell"/>
</dbReference>
<dbReference type="GO" id="GO:0045259">
    <property type="term" value="C:proton-transporting ATP synthase complex"/>
    <property type="evidence" value="ECO:0007669"/>
    <property type="project" value="UniProtKB-KW"/>
</dbReference>
<dbReference type="GO" id="GO:0005524">
    <property type="term" value="F:ATP binding"/>
    <property type="evidence" value="ECO:0007669"/>
    <property type="project" value="UniProtKB-UniRule"/>
</dbReference>
<dbReference type="GO" id="GO:0016887">
    <property type="term" value="F:ATP hydrolysis activity"/>
    <property type="evidence" value="ECO:0007669"/>
    <property type="project" value="InterPro"/>
</dbReference>
<dbReference type="GO" id="GO:0046933">
    <property type="term" value="F:proton-transporting ATP synthase activity, rotational mechanism"/>
    <property type="evidence" value="ECO:0007669"/>
    <property type="project" value="UniProtKB-UniRule"/>
</dbReference>
<dbReference type="CDD" id="cd18110">
    <property type="entry name" value="ATP-synt_F1_beta_C"/>
    <property type="match status" value="1"/>
</dbReference>
<dbReference type="CDD" id="cd18115">
    <property type="entry name" value="ATP-synt_F1_beta_N"/>
    <property type="match status" value="1"/>
</dbReference>
<dbReference type="CDD" id="cd01133">
    <property type="entry name" value="F1-ATPase_beta_CD"/>
    <property type="match status" value="1"/>
</dbReference>
<dbReference type="FunFam" id="1.10.1140.10:FF:000001">
    <property type="entry name" value="ATP synthase subunit beta"/>
    <property type="match status" value="1"/>
</dbReference>
<dbReference type="FunFam" id="2.40.10.170:FF:000003">
    <property type="entry name" value="ATP synthase subunit beta"/>
    <property type="match status" value="1"/>
</dbReference>
<dbReference type="FunFam" id="3.40.50.300:FF:000004">
    <property type="entry name" value="ATP synthase subunit beta"/>
    <property type="match status" value="1"/>
</dbReference>
<dbReference type="Gene3D" id="2.40.10.170">
    <property type="match status" value="1"/>
</dbReference>
<dbReference type="Gene3D" id="1.10.1140.10">
    <property type="entry name" value="Bovine Mitochondrial F1-atpase, Atp Synthase Beta Chain, Chain D, domain 3"/>
    <property type="match status" value="1"/>
</dbReference>
<dbReference type="Gene3D" id="3.40.50.300">
    <property type="entry name" value="P-loop containing nucleotide triphosphate hydrolases"/>
    <property type="match status" value="1"/>
</dbReference>
<dbReference type="HAMAP" id="MF_01347">
    <property type="entry name" value="ATP_synth_beta_bact"/>
    <property type="match status" value="1"/>
</dbReference>
<dbReference type="InterPro" id="IPR003593">
    <property type="entry name" value="AAA+_ATPase"/>
</dbReference>
<dbReference type="InterPro" id="IPR055190">
    <property type="entry name" value="ATP-synt_VA_C"/>
</dbReference>
<dbReference type="InterPro" id="IPR005722">
    <property type="entry name" value="ATP_synth_F1_bsu"/>
</dbReference>
<dbReference type="InterPro" id="IPR020003">
    <property type="entry name" value="ATPase_a/bsu_AS"/>
</dbReference>
<dbReference type="InterPro" id="IPR050053">
    <property type="entry name" value="ATPase_alpha/beta_chains"/>
</dbReference>
<dbReference type="InterPro" id="IPR004100">
    <property type="entry name" value="ATPase_F1/V1/A1_a/bsu_N"/>
</dbReference>
<dbReference type="InterPro" id="IPR036121">
    <property type="entry name" value="ATPase_F1/V1/A1_a/bsu_N_sf"/>
</dbReference>
<dbReference type="InterPro" id="IPR000194">
    <property type="entry name" value="ATPase_F1/V1/A1_a/bsu_nucl-bd"/>
</dbReference>
<dbReference type="InterPro" id="IPR024034">
    <property type="entry name" value="ATPase_F1/V1_b/a_C"/>
</dbReference>
<dbReference type="InterPro" id="IPR027417">
    <property type="entry name" value="P-loop_NTPase"/>
</dbReference>
<dbReference type="NCBIfam" id="TIGR01039">
    <property type="entry name" value="atpD"/>
    <property type="match status" value="1"/>
</dbReference>
<dbReference type="PANTHER" id="PTHR15184">
    <property type="entry name" value="ATP SYNTHASE"/>
    <property type="match status" value="1"/>
</dbReference>
<dbReference type="PANTHER" id="PTHR15184:SF71">
    <property type="entry name" value="ATP SYNTHASE SUBUNIT BETA, MITOCHONDRIAL"/>
    <property type="match status" value="1"/>
</dbReference>
<dbReference type="Pfam" id="PF00006">
    <property type="entry name" value="ATP-synt_ab"/>
    <property type="match status" value="1"/>
</dbReference>
<dbReference type="Pfam" id="PF02874">
    <property type="entry name" value="ATP-synt_ab_N"/>
    <property type="match status" value="1"/>
</dbReference>
<dbReference type="Pfam" id="PF22919">
    <property type="entry name" value="ATP-synt_VA_C"/>
    <property type="match status" value="1"/>
</dbReference>
<dbReference type="SMART" id="SM00382">
    <property type="entry name" value="AAA"/>
    <property type="match status" value="1"/>
</dbReference>
<dbReference type="SUPFAM" id="SSF47917">
    <property type="entry name" value="C-terminal domain of alpha and beta subunits of F1 ATP synthase"/>
    <property type="match status" value="1"/>
</dbReference>
<dbReference type="SUPFAM" id="SSF50615">
    <property type="entry name" value="N-terminal domain of alpha and beta subunits of F1 ATP synthase"/>
    <property type="match status" value="1"/>
</dbReference>
<dbReference type="SUPFAM" id="SSF52540">
    <property type="entry name" value="P-loop containing nucleoside triphosphate hydrolases"/>
    <property type="match status" value="1"/>
</dbReference>
<dbReference type="PROSITE" id="PS00152">
    <property type="entry name" value="ATPASE_ALPHA_BETA"/>
    <property type="match status" value="1"/>
</dbReference>
<organism>
    <name type="scientific">Francisella tularensis subsp. holarctica (strain OSU18)</name>
    <dbReference type="NCBI Taxonomy" id="393011"/>
    <lineage>
        <taxon>Bacteria</taxon>
        <taxon>Pseudomonadati</taxon>
        <taxon>Pseudomonadota</taxon>
        <taxon>Gammaproteobacteria</taxon>
        <taxon>Thiotrichales</taxon>
        <taxon>Francisellaceae</taxon>
        <taxon>Francisella</taxon>
    </lineage>
</organism>
<evidence type="ECO:0000255" key="1">
    <source>
        <dbReference type="HAMAP-Rule" id="MF_01347"/>
    </source>
</evidence>
<comment type="function">
    <text evidence="1">Produces ATP from ADP in the presence of a proton gradient across the membrane. The catalytic sites are hosted primarily by the beta subunits.</text>
</comment>
<comment type="catalytic activity">
    <reaction evidence="1">
        <text>ATP + H2O + 4 H(+)(in) = ADP + phosphate + 5 H(+)(out)</text>
        <dbReference type="Rhea" id="RHEA:57720"/>
        <dbReference type="ChEBI" id="CHEBI:15377"/>
        <dbReference type="ChEBI" id="CHEBI:15378"/>
        <dbReference type="ChEBI" id="CHEBI:30616"/>
        <dbReference type="ChEBI" id="CHEBI:43474"/>
        <dbReference type="ChEBI" id="CHEBI:456216"/>
        <dbReference type="EC" id="7.1.2.2"/>
    </reaction>
</comment>
<comment type="subunit">
    <text evidence="1">F-type ATPases have 2 components, CF(1) - the catalytic core - and CF(0) - the membrane proton channel. CF(1) has five subunits: alpha(3), beta(3), gamma(1), delta(1), epsilon(1). CF(0) has three main subunits: a(1), b(2) and c(9-12). The alpha and beta chains form an alternating ring which encloses part of the gamma chain. CF(1) is attached to CF(0) by a central stalk formed by the gamma and epsilon chains, while a peripheral stalk is formed by the delta and b chains.</text>
</comment>
<comment type="subcellular location">
    <subcellularLocation>
        <location evidence="1">Cell inner membrane</location>
        <topology evidence="1">Peripheral membrane protein</topology>
    </subcellularLocation>
</comment>
<comment type="similarity">
    <text evidence="1">Belongs to the ATPase alpha/beta chains family.</text>
</comment>
<keyword id="KW-0066">ATP synthesis</keyword>
<keyword id="KW-0067">ATP-binding</keyword>
<keyword id="KW-0997">Cell inner membrane</keyword>
<keyword id="KW-1003">Cell membrane</keyword>
<keyword id="KW-0139">CF(1)</keyword>
<keyword id="KW-0375">Hydrogen ion transport</keyword>
<keyword id="KW-0406">Ion transport</keyword>
<keyword id="KW-0472">Membrane</keyword>
<keyword id="KW-0547">Nucleotide-binding</keyword>
<keyword id="KW-1278">Translocase</keyword>
<keyword id="KW-0813">Transport</keyword>
<feature type="chain" id="PRO_1000055114" description="ATP synthase subunit beta">
    <location>
        <begin position="1"/>
        <end position="458"/>
    </location>
</feature>
<feature type="binding site" evidence="1">
    <location>
        <begin position="148"/>
        <end position="155"/>
    </location>
    <ligand>
        <name>ATP</name>
        <dbReference type="ChEBI" id="CHEBI:30616"/>
    </ligand>
</feature>